<sequence length="355" mass="39866">MTASTSVAVGCAVGIPVGVGIIIAVCFWFNLQKRYKREEQDDRELERAIYDESGFVSFDNFGPLRDSKDEAALASSELKNPDHTSGSSEGSAHPEEKDGKSRDQEKPLGKKNSKYYVPAYRRKINLLQVRNNNYGNNARQKSVVDLPSINNSSNVSLSSSQRHITKRQISVYDQMVPVISDEGPKFFADPSSDTNTSNDQNKASMIELKHNTRQSINENLIRKLQNQDFGSYYPRRASSSFLNGNISNASFHTRNSSITSVNKRDALEDVFATPKSAAQSQLPNTFDKDNEGIDADHSVKDSRSAITDKDKDIYKLQNNYDVGNIGEIAEEDQYENEFTNYSQSKREFIESLRPK</sequence>
<protein>
    <recommendedName>
        <fullName>Suppressor of lethality of KEX2 GAS1 double null mutant protein 1</fullName>
    </recommendedName>
</protein>
<feature type="chain" id="PRO_0000399674" description="Suppressor of lethality of KEX2 GAS1 double null mutant protein 1">
    <location>
        <begin position="1"/>
        <end position="355"/>
    </location>
</feature>
<feature type="topological domain" description="Extracellular" evidence="3">
    <location>
        <begin position="1"/>
        <end position="8"/>
    </location>
</feature>
<feature type="transmembrane region" description="Helical; Signal-anchor for type III membrane protein" evidence="3">
    <location>
        <begin position="9"/>
        <end position="29"/>
    </location>
</feature>
<feature type="topological domain" description="Cytoplasmic" evidence="3">
    <location>
        <begin position="30"/>
        <end position="355"/>
    </location>
</feature>
<feature type="region of interest" description="Disordered" evidence="4">
    <location>
        <begin position="70"/>
        <end position="114"/>
    </location>
</feature>
<feature type="region of interest" description="Disordered" evidence="4">
    <location>
        <begin position="276"/>
        <end position="298"/>
    </location>
</feature>
<feature type="compositionally biased region" description="Basic and acidic residues" evidence="4">
    <location>
        <begin position="92"/>
        <end position="108"/>
    </location>
</feature>
<feature type="compositionally biased region" description="Basic and acidic residues" evidence="4">
    <location>
        <begin position="286"/>
        <end position="298"/>
    </location>
</feature>
<feature type="modified residue" description="Phosphoserine" evidence="2">
    <location>
        <position position="142"/>
    </location>
</feature>
<feature type="modified residue" description="Phosphothreonine" evidence="2">
    <location>
        <position position="273"/>
    </location>
</feature>
<accession>B5VMP1</accession>
<reference key="1">
    <citation type="journal article" date="2008" name="FEMS Yeast Res.">
        <title>Comparative genome analysis of a Saccharomyces cerevisiae wine strain.</title>
        <authorList>
            <person name="Borneman A.R."/>
            <person name="Forgan A.H."/>
            <person name="Pretorius I.S."/>
            <person name="Chambers P.J."/>
        </authorList>
    </citation>
    <scope>NUCLEOTIDE SEQUENCE [LARGE SCALE GENOMIC DNA]</scope>
    <source>
        <strain>AWRI1631</strain>
    </source>
</reference>
<dbReference type="EMBL" id="ABSV01001521">
    <property type="protein sequence ID" value="EDZ70802.1"/>
    <property type="molecule type" value="Genomic_DNA"/>
</dbReference>
<dbReference type="Proteomes" id="UP000008988">
    <property type="component" value="Unassembled WGS sequence"/>
</dbReference>
<dbReference type="GO" id="GO:0033101">
    <property type="term" value="C:cellular bud membrane"/>
    <property type="evidence" value="ECO:0007669"/>
    <property type="project" value="UniProtKB-SubCell"/>
</dbReference>
<dbReference type="GO" id="GO:0071555">
    <property type="term" value="P:cell wall organization"/>
    <property type="evidence" value="ECO:0007669"/>
    <property type="project" value="UniProtKB-KW"/>
</dbReference>
<evidence type="ECO:0000250" key="1"/>
<evidence type="ECO:0000250" key="2">
    <source>
        <dbReference type="UniProtKB" id="P36169"/>
    </source>
</evidence>
<evidence type="ECO:0000255" key="3"/>
<evidence type="ECO:0000256" key="4">
    <source>
        <dbReference type="SAM" id="MobiDB-lite"/>
    </source>
</evidence>
<evidence type="ECO:0000305" key="5"/>
<proteinExistence type="inferred from homology"/>
<comment type="function">
    <text evidence="1">Plays a role in cell wall integrity. Affects the cell wall polymer composition in the growing region of the cell (By similarity).</text>
</comment>
<comment type="subcellular location">
    <subcellularLocation>
        <location evidence="1">Cell membrane</location>
        <topology evidence="1">Single-pass type III membrane protein</topology>
        <orientation evidence="1">Cytoplasmic side</orientation>
    </subcellularLocation>
    <subcellularLocation>
        <location evidence="1">Bud membrane</location>
        <topology evidence="1">Single-pass type III membrane protein</topology>
        <orientation evidence="1">Cytoplasmic side</orientation>
    </subcellularLocation>
    <text evidence="1">Localizes on the inner surface of the plasma membrane at the bud and in the daughter cell. Localizes at an incipient bud site in the cells with emerging buds, a bud tip in small- or medium-budded cells, and a cell periphery in large-budded cells.</text>
</comment>
<comment type="similarity">
    <text evidence="5">Belongs to the SKG1 family.</text>
</comment>
<gene>
    <name type="primary">SKG1</name>
    <name type="ORF">AWRI1631_113220</name>
</gene>
<keyword id="KW-1003">Cell membrane</keyword>
<keyword id="KW-0961">Cell wall biogenesis/degradation</keyword>
<keyword id="KW-0472">Membrane</keyword>
<keyword id="KW-0597">Phosphoprotein</keyword>
<keyword id="KW-0735">Signal-anchor</keyword>
<keyword id="KW-0812">Transmembrane</keyword>
<keyword id="KW-1133">Transmembrane helix</keyword>
<organism>
    <name type="scientific">Saccharomyces cerevisiae (strain AWRI1631)</name>
    <name type="common">Baker's yeast</name>
    <dbReference type="NCBI Taxonomy" id="545124"/>
    <lineage>
        <taxon>Eukaryota</taxon>
        <taxon>Fungi</taxon>
        <taxon>Dikarya</taxon>
        <taxon>Ascomycota</taxon>
        <taxon>Saccharomycotina</taxon>
        <taxon>Saccharomycetes</taxon>
        <taxon>Saccharomycetales</taxon>
        <taxon>Saccharomycetaceae</taxon>
        <taxon>Saccharomyces</taxon>
    </lineage>
</organism>
<name>SKG1_YEAS6</name>